<gene>
    <name evidence="1" type="primary">nuoI</name>
    <name type="ordered locus">BPEN_502</name>
</gene>
<keyword id="KW-0004">4Fe-4S</keyword>
<keyword id="KW-0997">Cell inner membrane</keyword>
<keyword id="KW-1003">Cell membrane</keyword>
<keyword id="KW-0408">Iron</keyword>
<keyword id="KW-0411">Iron-sulfur</keyword>
<keyword id="KW-0472">Membrane</keyword>
<keyword id="KW-0479">Metal-binding</keyword>
<keyword id="KW-0520">NAD</keyword>
<keyword id="KW-0874">Quinone</keyword>
<keyword id="KW-1185">Reference proteome</keyword>
<keyword id="KW-0677">Repeat</keyword>
<keyword id="KW-1278">Translocase</keyword>
<keyword id="KW-0830">Ubiquinone</keyword>
<dbReference type="EC" id="7.1.1.-" evidence="1"/>
<dbReference type="EMBL" id="CP000016">
    <property type="protein sequence ID" value="AAZ41116.1"/>
    <property type="molecule type" value="Genomic_DNA"/>
</dbReference>
<dbReference type="SMR" id="Q492I3"/>
<dbReference type="STRING" id="291272.BPEN_502"/>
<dbReference type="KEGG" id="bpn:BPEN_502"/>
<dbReference type="eggNOG" id="COG1143">
    <property type="taxonomic scope" value="Bacteria"/>
</dbReference>
<dbReference type="HOGENOM" id="CLU_067218_4_3_6"/>
<dbReference type="Proteomes" id="UP000007794">
    <property type="component" value="Chromosome"/>
</dbReference>
<dbReference type="GO" id="GO:0005886">
    <property type="term" value="C:plasma membrane"/>
    <property type="evidence" value="ECO:0007669"/>
    <property type="project" value="UniProtKB-SubCell"/>
</dbReference>
<dbReference type="GO" id="GO:0051539">
    <property type="term" value="F:4 iron, 4 sulfur cluster binding"/>
    <property type="evidence" value="ECO:0007669"/>
    <property type="project" value="UniProtKB-KW"/>
</dbReference>
<dbReference type="GO" id="GO:0005506">
    <property type="term" value="F:iron ion binding"/>
    <property type="evidence" value="ECO:0007669"/>
    <property type="project" value="UniProtKB-UniRule"/>
</dbReference>
<dbReference type="GO" id="GO:0050136">
    <property type="term" value="F:NADH:ubiquinone reductase (non-electrogenic) activity"/>
    <property type="evidence" value="ECO:0007669"/>
    <property type="project" value="UniProtKB-UniRule"/>
</dbReference>
<dbReference type="GO" id="GO:0048038">
    <property type="term" value="F:quinone binding"/>
    <property type="evidence" value="ECO:0007669"/>
    <property type="project" value="UniProtKB-KW"/>
</dbReference>
<dbReference type="GO" id="GO:0009060">
    <property type="term" value="P:aerobic respiration"/>
    <property type="evidence" value="ECO:0007669"/>
    <property type="project" value="TreeGrafter"/>
</dbReference>
<dbReference type="FunFam" id="3.30.70.3270:FF:000002">
    <property type="entry name" value="NADH-quinone oxidoreductase subunit I"/>
    <property type="match status" value="1"/>
</dbReference>
<dbReference type="Gene3D" id="3.30.70.3270">
    <property type="match status" value="1"/>
</dbReference>
<dbReference type="HAMAP" id="MF_01351">
    <property type="entry name" value="NDH1_NuoI"/>
    <property type="match status" value="1"/>
</dbReference>
<dbReference type="InterPro" id="IPR017896">
    <property type="entry name" value="4Fe4S_Fe-S-bd"/>
</dbReference>
<dbReference type="InterPro" id="IPR017900">
    <property type="entry name" value="4Fe4S_Fe_S_CS"/>
</dbReference>
<dbReference type="InterPro" id="IPR010226">
    <property type="entry name" value="NADH_quinone_OxRdtase_chainI"/>
</dbReference>
<dbReference type="NCBIfam" id="TIGR01971">
    <property type="entry name" value="NuoI"/>
    <property type="match status" value="1"/>
</dbReference>
<dbReference type="NCBIfam" id="NF004536">
    <property type="entry name" value="PRK05888.1-1"/>
    <property type="match status" value="1"/>
</dbReference>
<dbReference type="PANTHER" id="PTHR10849:SF20">
    <property type="entry name" value="NADH DEHYDROGENASE [UBIQUINONE] IRON-SULFUR PROTEIN 8, MITOCHONDRIAL"/>
    <property type="match status" value="1"/>
</dbReference>
<dbReference type="PANTHER" id="PTHR10849">
    <property type="entry name" value="NADH DEHYDROGENASE UBIQUINONE IRON-SULFUR PROTEIN 8, MITOCHONDRIAL"/>
    <property type="match status" value="1"/>
</dbReference>
<dbReference type="Pfam" id="PF12838">
    <property type="entry name" value="Fer4_7"/>
    <property type="match status" value="1"/>
</dbReference>
<dbReference type="SUPFAM" id="SSF54862">
    <property type="entry name" value="4Fe-4S ferredoxins"/>
    <property type="match status" value="1"/>
</dbReference>
<dbReference type="PROSITE" id="PS00198">
    <property type="entry name" value="4FE4S_FER_1"/>
    <property type="match status" value="2"/>
</dbReference>
<dbReference type="PROSITE" id="PS51379">
    <property type="entry name" value="4FE4S_FER_2"/>
    <property type="match status" value="2"/>
</dbReference>
<proteinExistence type="inferred from homology"/>
<evidence type="ECO:0000255" key="1">
    <source>
        <dbReference type="HAMAP-Rule" id="MF_01351"/>
    </source>
</evidence>
<name>NUOI_BLOPB</name>
<organism>
    <name type="scientific">Blochmanniella pennsylvanica (strain BPEN)</name>
    <dbReference type="NCBI Taxonomy" id="291272"/>
    <lineage>
        <taxon>Bacteria</taxon>
        <taxon>Pseudomonadati</taxon>
        <taxon>Pseudomonadota</taxon>
        <taxon>Gammaproteobacteria</taxon>
        <taxon>Enterobacterales</taxon>
        <taxon>Enterobacteriaceae</taxon>
        <taxon>ant endosymbionts</taxon>
        <taxon>Candidatus Blochmanniella</taxon>
    </lineage>
</organism>
<reference key="1">
    <citation type="journal article" date="2005" name="Genome Res.">
        <title>Genome sequence of Blochmannia pennsylvanicus indicates parallel evolutionary trends among bacterial mutualists of insects.</title>
        <authorList>
            <person name="Degnan P.H."/>
            <person name="Lazarus A.B."/>
            <person name="Wernegreen J.J."/>
        </authorList>
    </citation>
    <scope>NUCLEOTIDE SEQUENCE [LARGE SCALE GENOMIC DNA]</scope>
    <source>
        <strain>BPEN</strain>
    </source>
</reference>
<feature type="chain" id="PRO_0000245701" description="NADH-quinone oxidoreductase subunit I">
    <location>
        <begin position="1"/>
        <end position="181"/>
    </location>
</feature>
<feature type="domain" description="4Fe-4S ferredoxin-type 1" evidence="1">
    <location>
        <begin position="52"/>
        <end position="81"/>
    </location>
</feature>
<feature type="domain" description="4Fe-4S ferredoxin-type 2" evidence="1">
    <location>
        <begin position="91"/>
        <end position="120"/>
    </location>
</feature>
<feature type="binding site" evidence="1">
    <location>
        <position position="61"/>
    </location>
    <ligand>
        <name>[4Fe-4S] cluster</name>
        <dbReference type="ChEBI" id="CHEBI:49883"/>
        <label>1</label>
    </ligand>
</feature>
<feature type="binding site" evidence="1">
    <location>
        <position position="64"/>
    </location>
    <ligand>
        <name>[4Fe-4S] cluster</name>
        <dbReference type="ChEBI" id="CHEBI:49883"/>
        <label>1</label>
    </ligand>
</feature>
<feature type="binding site" evidence="1">
    <location>
        <position position="67"/>
    </location>
    <ligand>
        <name>[4Fe-4S] cluster</name>
        <dbReference type="ChEBI" id="CHEBI:49883"/>
        <label>1</label>
    </ligand>
</feature>
<feature type="binding site" evidence="1">
    <location>
        <position position="71"/>
    </location>
    <ligand>
        <name>[4Fe-4S] cluster</name>
        <dbReference type="ChEBI" id="CHEBI:49883"/>
        <label>2</label>
    </ligand>
</feature>
<feature type="binding site" evidence="1">
    <location>
        <position position="100"/>
    </location>
    <ligand>
        <name>[4Fe-4S] cluster</name>
        <dbReference type="ChEBI" id="CHEBI:49883"/>
        <label>2</label>
    </ligand>
</feature>
<feature type="binding site" evidence="1">
    <location>
        <position position="103"/>
    </location>
    <ligand>
        <name>[4Fe-4S] cluster</name>
        <dbReference type="ChEBI" id="CHEBI:49883"/>
        <label>2</label>
    </ligand>
</feature>
<feature type="binding site" evidence="1">
    <location>
        <position position="106"/>
    </location>
    <ligand>
        <name>[4Fe-4S] cluster</name>
        <dbReference type="ChEBI" id="CHEBI:49883"/>
        <label>2</label>
    </ligand>
</feature>
<feature type="binding site" evidence="1">
    <location>
        <position position="110"/>
    </location>
    <ligand>
        <name>[4Fe-4S] cluster</name>
        <dbReference type="ChEBI" id="CHEBI:49883"/>
        <label>1</label>
    </ligand>
</feature>
<comment type="function">
    <text evidence="1">NDH-1 shuttles electrons from NADH, via FMN and iron-sulfur (Fe-S) centers, to quinones in the respiratory chain. The immediate electron acceptor for the enzyme in this species is believed to be ubiquinone. Couples the redox reaction to proton translocation (for every two electrons transferred, four hydrogen ions are translocated across the cytoplasmic membrane), and thus conserves the redox energy in a proton gradient.</text>
</comment>
<comment type="catalytic activity">
    <reaction evidence="1">
        <text>a quinone + NADH + 5 H(+)(in) = a quinol + NAD(+) + 4 H(+)(out)</text>
        <dbReference type="Rhea" id="RHEA:57888"/>
        <dbReference type="ChEBI" id="CHEBI:15378"/>
        <dbReference type="ChEBI" id="CHEBI:24646"/>
        <dbReference type="ChEBI" id="CHEBI:57540"/>
        <dbReference type="ChEBI" id="CHEBI:57945"/>
        <dbReference type="ChEBI" id="CHEBI:132124"/>
    </reaction>
</comment>
<comment type="cofactor">
    <cofactor evidence="1">
        <name>[4Fe-4S] cluster</name>
        <dbReference type="ChEBI" id="CHEBI:49883"/>
    </cofactor>
    <text evidence="1">Binds 2 [4Fe-4S] clusters per subunit.</text>
</comment>
<comment type="subunit">
    <text evidence="1">NDH-1 is composed of 13 different subunits. Subunits NuoA, H, J, K, L, M, N constitute the membrane sector of the complex.</text>
</comment>
<comment type="subcellular location">
    <subcellularLocation>
        <location evidence="1">Cell inner membrane</location>
        <topology evidence="1">Peripheral membrane protein</topology>
    </subcellularLocation>
</comment>
<comment type="similarity">
    <text evidence="1">Belongs to the complex I 23 kDa subunit family.</text>
</comment>
<sequence>MMKLKKVFIDIGSILRSIWMIGMQAFSKRETRMYPEVPYIPSPRYRGRIVLTRDSSGRERCVACNLCAVACPVGCISLKKGESTDGRWYPKFFRINFSRCIFCGMCEEACPTAAIQLTPDFEMSDFKRHDLVYEKSDLLISGPGKYLEYDFYQFSGKEILDKKKGDAIKESKPINVKNILP</sequence>
<accession>Q492I3</accession>
<protein>
    <recommendedName>
        <fullName evidence="1">NADH-quinone oxidoreductase subunit I</fullName>
        <ecNumber evidence="1">7.1.1.-</ecNumber>
    </recommendedName>
    <alternativeName>
        <fullName evidence="1">NADH dehydrogenase I subunit I</fullName>
    </alternativeName>
    <alternativeName>
        <fullName evidence="1">NDH-1 subunit I</fullName>
    </alternativeName>
</protein>